<gene>
    <name type="primary">EBNA2</name>
    <name type="ORF">BYRF1</name>
</gene>
<name>EBNA2_EBVG</name>
<proteinExistence type="inferred from homology"/>
<dbReference type="EMBL" id="AY961628">
    <property type="protein sequence ID" value="AAY41099.1"/>
    <property type="molecule type" value="Genomic_DNA"/>
</dbReference>
<dbReference type="BMRB" id="Q3KSV2"/>
<dbReference type="SMR" id="Q3KSV2"/>
<dbReference type="IntAct" id="Q3KSV2">
    <property type="interactions" value="13"/>
</dbReference>
<dbReference type="Proteomes" id="UP000007641">
    <property type="component" value="Genome"/>
</dbReference>
<dbReference type="GO" id="GO:0044204">
    <property type="term" value="C:host cell nuclear matrix"/>
    <property type="evidence" value="ECO:0007669"/>
    <property type="project" value="UniProtKB-SubCell"/>
</dbReference>
<dbReference type="GO" id="GO:0004865">
    <property type="term" value="F:protein serine/threonine phosphatase inhibitor activity"/>
    <property type="evidence" value="ECO:0007669"/>
    <property type="project" value="UniProtKB-KW"/>
</dbReference>
<dbReference type="GO" id="GO:0044071">
    <property type="term" value="P:symbiont-mediated perturbation of host cell cycle progression"/>
    <property type="evidence" value="ECO:0007669"/>
    <property type="project" value="UniProtKB-KW"/>
</dbReference>
<dbReference type="GO" id="GO:0052170">
    <property type="term" value="P:symbiont-mediated suppression of host innate immune response"/>
    <property type="evidence" value="ECO:0007669"/>
    <property type="project" value="UniProtKB-KW"/>
</dbReference>
<dbReference type="GO" id="GO:0039606">
    <property type="term" value="P:symbiont-mediated suppression of host translation initiation"/>
    <property type="evidence" value="ECO:0007669"/>
    <property type="project" value="UniProtKB-KW"/>
</dbReference>
<dbReference type="GO" id="GO:0039502">
    <property type="term" value="P:symbiont-mediated suppression of host type I interferon-mediated signaling pathway"/>
    <property type="evidence" value="ECO:0007669"/>
    <property type="project" value="UniProtKB-KW"/>
</dbReference>
<reference key="1">
    <citation type="journal article" date="2005" name="J. Virol.">
        <title>Genomic sequence analysis of Epstein-Barr virus strain GD1 from a nasopharyngeal carcinoma patient.</title>
        <authorList>
            <person name="Zeng M.-S."/>
            <person name="Li D.-J."/>
            <person name="Liu Q.-L."/>
            <person name="Song L.-B."/>
            <person name="Li M.-Z."/>
            <person name="Zhang R.-H."/>
            <person name="Yu X.-J."/>
            <person name="Wang H.-M."/>
            <person name="Ernberg I."/>
            <person name="Zeng Y.-X."/>
        </authorList>
    </citation>
    <scope>NUCLEOTIDE SEQUENCE [LARGE SCALE GENOMIC DNA]</scope>
</reference>
<sequence>MPTFYLALHGGQTYHLIVDTDSVGNPSLSVIPSNPYQEQLSDTPLIPLTIFVGENTGVPPPPPPPPQRRDAWTQEPSPLDWDPLGYDVGHGPLASAMRMLWMANYIVRQSRGDRGLILPQGPQTAPQAMLVQPHVPPLRPTAPTILSPLSQPRLTPPQPLMMPPRPTPPTPLPPATLTVPPRPTRPTTLPPTPLLTVLQRPTELQPTPSPPRMHLPVLHVPDQSMHPLTHQSTPNDPDSPEPRSPTVFYNIPPMPLPPSQLPPPAAPAQPPPGVINDQQLHHLPSGPPWWPPICDPPQPSKTQGQSRGQSRGRGRGRGRGRGKSRDKQRKPGGPWRPEPNTSSPSMPELSPVLGLHQGQGAGDSPTPGPSNAAPVCRNSHTATPNVSPIHEPESHNSPEAPILFPDDWYPPSIDPADLDESWDYIFETTESPSSDEDYVEGPSKRPRPSIQ</sequence>
<feature type="chain" id="PRO_0000226600" description="Epstein-Barr nuclear antigen 2">
    <location>
        <begin position="1"/>
        <end position="451"/>
    </location>
</feature>
<feature type="repeat" description="1">
    <location>
        <begin position="311"/>
        <end position="312"/>
    </location>
</feature>
<feature type="repeat" description="2">
    <location>
        <begin position="313"/>
        <end position="314"/>
    </location>
</feature>
<feature type="repeat" description="3">
    <location>
        <begin position="315"/>
        <end position="316"/>
    </location>
</feature>
<feature type="repeat" description="4">
    <location>
        <begin position="317"/>
        <end position="318"/>
    </location>
</feature>
<feature type="repeat" description="5">
    <location>
        <begin position="319"/>
        <end position="320"/>
    </location>
</feature>
<feature type="repeat" description="6">
    <location>
        <begin position="321"/>
        <end position="322"/>
    </location>
</feature>
<feature type="repeat" description="6">
    <location>
        <begin position="323"/>
        <end position="324"/>
    </location>
</feature>
<feature type="region of interest" description="SMARCB1/INI1 binding" evidence="1">
    <location>
        <begin position="1"/>
        <end position="176"/>
    </location>
</feature>
<feature type="region of interest" description="Disordered" evidence="3">
    <location>
        <begin position="52"/>
        <end position="78"/>
    </location>
</feature>
<feature type="region of interest" description="Disordered" evidence="3">
    <location>
        <begin position="148"/>
        <end position="451"/>
    </location>
</feature>
<feature type="region of interest" description="6.5 X 2 AA tandem repeats of R-G">
    <location>
        <begin position="311"/>
        <end position="324"/>
    </location>
</feature>
<feature type="short sequence motif" description="PXLXP motif, interaction with host ZMYND11" evidence="1">
    <location>
        <begin position="347"/>
        <end position="351"/>
    </location>
</feature>
<feature type="short sequence motif" description="PXLXP motif, interaction with host ZMYND11" evidence="1">
    <location>
        <begin position="401"/>
        <end position="405"/>
    </location>
</feature>
<feature type="compositionally biased region" description="Pro residues" evidence="3">
    <location>
        <begin position="154"/>
        <end position="193"/>
    </location>
</feature>
<feature type="compositionally biased region" description="Pro residues" evidence="3">
    <location>
        <begin position="252"/>
        <end position="273"/>
    </location>
</feature>
<feature type="compositionally biased region" description="Pro residues" evidence="3">
    <location>
        <begin position="285"/>
        <end position="299"/>
    </location>
</feature>
<feature type="compositionally biased region" description="Low complexity" evidence="3">
    <location>
        <begin position="300"/>
        <end position="309"/>
    </location>
</feature>
<feature type="compositionally biased region" description="Basic residues" evidence="3">
    <location>
        <begin position="310"/>
        <end position="330"/>
    </location>
</feature>
<keyword id="KW-0010">Activator</keyword>
<keyword id="KW-1048">Host nucleus</keyword>
<keyword id="KW-0945">Host-virus interaction</keyword>
<keyword id="KW-1090">Inhibition of host innate immune response by virus</keyword>
<keyword id="KW-1114">Inhibition of host interferon signaling pathway by virus</keyword>
<keyword id="KW-0922">Interferon antiviral system evasion</keyword>
<keyword id="KW-1121">Modulation of host cell cycle by virus</keyword>
<keyword id="KW-1126">Modulation of host PP1 activity by virus</keyword>
<keyword id="KW-0597">Phosphoprotein</keyword>
<keyword id="KW-0677">Repeat</keyword>
<keyword id="KW-0804">Transcription</keyword>
<keyword id="KW-0805">Transcription regulation</keyword>
<keyword id="KW-0899">Viral immunoevasion</keyword>
<organism>
    <name type="scientific">Epstein-Barr virus (strain GD1)</name>
    <name type="common">HHV-4</name>
    <name type="synonym">Human gammaherpesvirus 4</name>
    <dbReference type="NCBI Taxonomy" id="10376"/>
    <lineage>
        <taxon>Viruses</taxon>
        <taxon>Duplodnaviria</taxon>
        <taxon>Heunggongvirae</taxon>
        <taxon>Peploviricota</taxon>
        <taxon>Herviviricetes</taxon>
        <taxon>Herpesvirales</taxon>
        <taxon>Orthoherpesviridae</taxon>
        <taxon>Gammaherpesvirinae</taxon>
        <taxon>Lymphocryptovirus</taxon>
        <taxon>Lymphocryptovirus humangamma4</taxon>
    </lineage>
</organism>
<organismHost>
    <name type="scientific">Homo sapiens</name>
    <name type="common">Human</name>
    <dbReference type="NCBI Taxonomy" id="9606"/>
</organismHost>
<protein>
    <recommendedName>
        <fullName>Epstein-Barr nuclear antigen 2</fullName>
        <shortName>EBNA-2</shortName>
        <shortName>EBV nuclear antigen 2</shortName>
    </recommendedName>
</protein>
<evidence type="ECO:0000250" key="1"/>
<evidence type="ECO:0000250" key="2">
    <source>
        <dbReference type="UniProtKB" id="P12978"/>
    </source>
</evidence>
<evidence type="ECO:0000256" key="3">
    <source>
        <dbReference type="SAM" id="MobiDB-lite"/>
    </source>
</evidence>
<evidence type="ECO:0000305" key="4"/>
<comment type="function">
    <text evidence="2">Plays a key role in the activation of the host resting B-cell and stimulation of B-cell proliferation. Acts by up-regulating the expression of viral EBNA1-6, LMP1, LMP2A and LMP2B genes, as well as several host genes including CD21, CD23 and MYC. Activates transcription by acting as an adapter molecule that binds to cellular sequence-specific DNA-binding proteins such as host CBF1, SMARCB1 and SPI1. Once EBNA2 is near promoter sites, its acidic activating domain recruits basal and activation-associated transcription factors TFIIB, TAF40, TFIIH components ERCC2 and ERCC3, and CBP in order to promote transcription. Alternatively, EBNA2 can affect activities of cell cycle regulators and retard cell cycle progression at G2/M phase. It also induces chromosomal instability, by disrupting mitotic checkpoints, multi-nucleation and formation of micronuclei in infected cells (By similarity).</text>
</comment>
<comment type="subunit">
    <text evidence="2">Interacts with human SMARCB1/INI1, presumably generating an open chromatin conformation at the EBNA2-responsive target genes. Interacts with human WAPL. Interacts with host CBF1; this interaction allows transcriptional activation by EBNA2. Interacts with host general transcription factors GTF2B, ERCC2 and ERCC3. Interacts (via PXLXP motif) with host ZMYND11/BS69 (via MYND-type zinc finger). Interacts with host EBF1 (By similarity).</text>
</comment>
<comment type="subcellular location">
    <subcellularLocation>
        <location>Host nucleus matrix</location>
    </subcellularLocation>
    <text evidence="1">Associated with the nuclear matrix.</text>
</comment>
<comment type="PTM">
    <text evidence="1">Phosphorylated.</text>
</comment>
<comment type="similarity">
    <text evidence="4">Belongs to the herpesviridae EBNA2 family.</text>
</comment>
<accession>Q3KSV2</accession>